<keyword id="KW-0007">Acetylation</keyword>
<keyword id="KW-0012">Acyltransferase</keyword>
<keyword id="KW-0276">Fatty acid metabolism</keyword>
<keyword id="KW-0443">Lipid metabolism</keyword>
<keyword id="KW-0472">Membrane</keyword>
<keyword id="KW-0496">Mitochondrion</keyword>
<keyword id="KW-0999">Mitochondrion inner membrane</keyword>
<keyword id="KW-1185">Reference proteome</keyword>
<keyword id="KW-0808">Transferase</keyword>
<keyword id="KW-0809">Transit peptide</keyword>
<keyword id="KW-0813">Transport</keyword>
<protein>
    <recommendedName>
        <fullName>Carnitine O-palmitoyltransferase 2, mitochondrial</fullName>
        <ecNumber>2.3.1.21</ecNumber>
    </recommendedName>
    <alternativeName>
        <fullName>Carnitine palmitoyltransferase II</fullName>
        <shortName>CPT II</shortName>
    </alternativeName>
</protein>
<sequence>MVARLLLRSWSRGLAVGPGAPCRPLSTGFEPSQYLQRSIVPTMHYQDSLPRLPIPKLEDTIRRYLSAQKPLLDDSQFRKTEQLCKSFETGIGKELHEQLVTQDKQNKHTSYISGPWFDMYLTARDPVVLNFNPFISFNPDPKSEYNDQLTRATNMTVSAIRFLKTLRADLLEPEVFHLNPAKSDTDTFKRFIRFVPSFLSWYGAYLVNAYPLDMSQYYRLFNSTRLPRPHRDELFTDDKARHLLVLRKGHFYIFDVLDQDGNIVSASEIQAHLKYILSDNSPAPEFPLSYLTSENRDIWAELRQRLVSGGNEATLGKVDSAVFCLCLDDFPIRDFVHLSHSMLHGDGTNRWFDKSFNLIIAKDGTAAIHFEHAWGDGVAVLRFFNEVFKDSTQAPAITPQSQPASTDSSVAVQKLNFKLSDALKTGISAAKEKFDATVKSLTIDYIRFQRGGREFLKKQKLSPDSMAQLAFQMAFLRQYGQTVATYESCSTAAFKHGRTETIRPASIFTKTCSEAFVREPSKYSAGELQQMMAKCSTYHNQLTREAAMGQGFDRHLFALRYLAAARGISMPELFLDPAYRQINHNILSTSTLSSPAVNIGCFAPVVPDGFGIGYSVQDNWIGCNVSAYQSRNAREFLQCVEKALEDMFDALEGKMIKT</sequence>
<proteinExistence type="evidence at transcript level"/>
<feature type="transit peptide" description="Mitochondrion" evidence="1">
    <location>
        <begin position="1"/>
        <end position="25"/>
    </location>
</feature>
<feature type="chain" id="PRO_0000239659" description="Carnitine O-palmitoyltransferase 2, mitochondrial">
    <location>
        <begin position="26"/>
        <end position="658"/>
    </location>
</feature>
<feature type="topological domain" description="Mitochondrial matrix" evidence="1">
    <location>
        <begin position="26"/>
        <end position="178"/>
    </location>
</feature>
<feature type="intramembrane region" description="Note=Mitochondrial inner membrane" evidence="1">
    <location>
        <begin position="179"/>
        <end position="208"/>
    </location>
</feature>
<feature type="topological domain" description="Mitochondrial matrix" evidence="1">
    <location>
        <begin position="209"/>
        <end position="658"/>
    </location>
</feature>
<feature type="active site" description="Proton acceptor" evidence="1">
    <location>
        <position position="372"/>
    </location>
</feature>
<feature type="binding site" evidence="1">
    <location>
        <begin position="452"/>
        <end position="464"/>
    </location>
    <ligand>
        <name>CoA</name>
        <dbReference type="ChEBI" id="CHEBI:57287"/>
    </ligand>
</feature>
<feature type="binding site" evidence="1">
    <location>
        <position position="486"/>
    </location>
    <ligand>
        <name>(R)-carnitine</name>
        <dbReference type="ChEBI" id="CHEBI:16347"/>
    </ligand>
</feature>
<feature type="binding site" evidence="1">
    <location>
        <position position="488"/>
    </location>
    <ligand>
        <name>(R)-carnitine</name>
        <dbReference type="ChEBI" id="CHEBI:16347"/>
    </ligand>
</feature>
<feature type="binding site" evidence="1">
    <location>
        <position position="499"/>
    </location>
    <ligand>
        <name>(R)-carnitine</name>
        <dbReference type="ChEBI" id="CHEBI:16347"/>
    </ligand>
</feature>
<feature type="modified residue" description="N6-succinyllysine" evidence="3">
    <location>
        <position position="69"/>
    </location>
</feature>
<feature type="modified residue" description="N6-acetyllysine" evidence="3">
    <location>
        <position position="79"/>
    </location>
</feature>
<feature type="modified residue" description="N6-succinyllysine" evidence="3">
    <location>
        <position position="85"/>
    </location>
</feature>
<feature type="modified residue" description="N6-acetyllysine; alternate" evidence="3">
    <location>
        <position position="239"/>
    </location>
</feature>
<feature type="modified residue" description="N6-succinyllysine; alternate" evidence="3">
    <location>
        <position position="239"/>
    </location>
</feature>
<feature type="modified residue" description="N6-acetyllysine; alternate" evidence="3">
    <location>
        <position position="418"/>
    </location>
</feature>
<feature type="modified residue" description="N6-succinyllysine; alternate" evidence="3">
    <location>
        <position position="418"/>
    </location>
</feature>
<feature type="modified residue" description="N6-succinyllysine" evidence="3">
    <location>
        <position position="424"/>
    </location>
</feature>
<feature type="modified residue" description="N6-succinyllysine" evidence="3">
    <location>
        <position position="439"/>
    </location>
</feature>
<feature type="modified residue" description="N6-acetyllysine; alternate" evidence="3">
    <location>
        <position position="510"/>
    </location>
</feature>
<feature type="modified residue" description="N6-succinyllysine; alternate" evidence="3">
    <location>
        <position position="510"/>
    </location>
</feature>
<accession>Q2KJB7</accession>
<reference key="1">
    <citation type="submission" date="2005-09" db="EMBL/GenBank/DDBJ databases">
        <authorList>
            <consortium name="NIH - Mammalian Gene Collection (MGC) project"/>
        </authorList>
    </citation>
    <scope>NUCLEOTIDE SEQUENCE [LARGE SCALE MRNA]</scope>
    <source>
        <strain>Hereford</strain>
        <tissue>Heart ventricle</tissue>
    </source>
</reference>
<evidence type="ECO:0000250" key="1"/>
<evidence type="ECO:0000250" key="2">
    <source>
        <dbReference type="UniProtKB" id="P23786"/>
    </source>
</evidence>
<evidence type="ECO:0000250" key="3">
    <source>
        <dbReference type="UniProtKB" id="P52825"/>
    </source>
</evidence>
<evidence type="ECO:0000305" key="4"/>
<name>CPT2_BOVIN</name>
<comment type="function">
    <text evidence="2">Involved in the intramitochondrial synthesis of acylcarnitines from accumulated acyl-CoA metabolites. Reconverts acylcarnitines back into the respective acyl-CoA esters that can then undergo beta-oxidation, an essential step for the mitochondrial uptake of long-chain fatty acids and their subsequent beta-oxidation in the mitochondrion. Active with medium (C8-C12) and long-chain (C14-C18) acyl-CoA esters.</text>
</comment>
<comment type="catalytic activity">
    <reaction evidence="2">
        <text>(R)-carnitine + hexadecanoyl-CoA = O-hexadecanoyl-(R)-carnitine + CoA</text>
        <dbReference type="Rhea" id="RHEA:12661"/>
        <dbReference type="ChEBI" id="CHEBI:16347"/>
        <dbReference type="ChEBI" id="CHEBI:17490"/>
        <dbReference type="ChEBI" id="CHEBI:57287"/>
        <dbReference type="ChEBI" id="CHEBI:57379"/>
        <dbReference type="EC" id="2.3.1.21"/>
    </reaction>
    <physiologicalReaction direction="right-to-left" evidence="2">
        <dbReference type="Rhea" id="RHEA:12663"/>
    </physiologicalReaction>
</comment>
<comment type="catalytic activity">
    <reaction evidence="2">
        <text>octanoyl-CoA + (R)-carnitine = O-octanoyl-(R)-carnitine + CoA</text>
        <dbReference type="Rhea" id="RHEA:17177"/>
        <dbReference type="ChEBI" id="CHEBI:16347"/>
        <dbReference type="ChEBI" id="CHEBI:18102"/>
        <dbReference type="ChEBI" id="CHEBI:57287"/>
        <dbReference type="ChEBI" id="CHEBI:57386"/>
    </reaction>
</comment>
<comment type="catalytic activity">
    <reaction evidence="2">
        <text>decanoyl-CoA + (R)-carnitine = O-decanoyl-(R)-carnitine + CoA</text>
        <dbReference type="Rhea" id="RHEA:44828"/>
        <dbReference type="ChEBI" id="CHEBI:16347"/>
        <dbReference type="ChEBI" id="CHEBI:28717"/>
        <dbReference type="ChEBI" id="CHEBI:57287"/>
        <dbReference type="ChEBI" id="CHEBI:61430"/>
    </reaction>
</comment>
<comment type="catalytic activity">
    <reaction evidence="2">
        <text>dodecanoyl-CoA + (R)-carnitine = O-dodecanoyl-R-carnitine + CoA</text>
        <dbReference type="Rhea" id="RHEA:40279"/>
        <dbReference type="ChEBI" id="CHEBI:16347"/>
        <dbReference type="ChEBI" id="CHEBI:57287"/>
        <dbReference type="ChEBI" id="CHEBI:57375"/>
        <dbReference type="ChEBI" id="CHEBI:77086"/>
    </reaction>
</comment>
<comment type="catalytic activity">
    <reaction evidence="2">
        <text>tetradecanoyl-CoA + (R)-carnitine = O-tetradecanoyl-(R)-carnitine + CoA</text>
        <dbReference type="Rhea" id="RHEA:44832"/>
        <dbReference type="ChEBI" id="CHEBI:16347"/>
        <dbReference type="ChEBI" id="CHEBI:57287"/>
        <dbReference type="ChEBI" id="CHEBI:57385"/>
        <dbReference type="ChEBI" id="CHEBI:84634"/>
    </reaction>
</comment>
<comment type="catalytic activity">
    <reaction evidence="2">
        <text>(R)-carnitine + octadecanoyl-CoA = O-octadecanoyl-(R)-carnitine + CoA</text>
        <dbReference type="Rhea" id="RHEA:44840"/>
        <dbReference type="ChEBI" id="CHEBI:16347"/>
        <dbReference type="ChEBI" id="CHEBI:57287"/>
        <dbReference type="ChEBI" id="CHEBI:57394"/>
        <dbReference type="ChEBI" id="CHEBI:84644"/>
    </reaction>
</comment>
<comment type="catalytic activity">
    <reaction evidence="2">
        <text>eicosanoyl-CoA + (R)-carnitine = O-eicosanoyl-(R)-carnitine + CoA</text>
        <dbReference type="Rhea" id="RHEA:44844"/>
        <dbReference type="ChEBI" id="CHEBI:16347"/>
        <dbReference type="ChEBI" id="CHEBI:57287"/>
        <dbReference type="ChEBI" id="CHEBI:57380"/>
        <dbReference type="ChEBI" id="CHEBI:84645"/>
    </reaction>
</comment>
<comment type="catalytic activity">
    <reaction evidence="2">
        <text>(9Z)-tetradecenoyl-CoA + (R)-carnitine = O-(9Z)-tetradecenoyl-(R)-carnitine + CoA</text>
        <dbReference type="Rhea" id="RHEA:44848"/>
        <dbReference type="ChEBI" id="CHEBI:16347"/>
        <dbReference type="ChEBI" id="CHEBI:57287"/>
        <dbReference type="ChEBI" id="CHEBI:65060"/>
        <dbReference type="ChEBI" id="CHEBI:84647"/>
    </reaction>
</comment>
<comment type="catalytic activity">
    <reaction evidence="2">
        <text>(5Z)-tetradecenoyl-CoA + (R)-carnitine = O-(5Z)-tetradecenoyl-(R)-carnitine + CoA</text>
        <dbReference type="Rhea" id="RHEA:44852"/>
        <dbReference type="ChEBI" id="CHEBI:16347"/>
        <dbReference type="ChEBI" id="CHEBI:57287"/>
        <dbReference type="ChEBI" id="CHEBI:84649"/>
        <dbReference type="ChEBI" id="CHEBI:84650"/>
    </reaction>
</comment>
<comment type="catalytic activity">
    <reaction evidence="2">
        <text>(R)-carnitine + (9Z)-octadecenoyl-CoA = O-(9Z)-octadecenoyl-(R)-carnitine + CoA</text>
        <dbReference type="Rhea" id="RHEA:44856"/>
        <dbReference type="ChEBI" id="CHEBI:16347"/>
        <dbReference type="ChEBI" id="CHEBI:57287"/>
        <dbReference type="ChEBI" id="CHEBI:57387"/>
        <dbReference type="ChEBI" id="CHEBI:84651"/>
    </reaction>
</comment>
<comment type="catalytic activity">
    <reaction evidence="2">
        <text>4,8-dimethylnonanoyl-CoA + (R)-carnitine = O-4,8-dimethylnonanoyl-(R)-carnitine + CoA</text>
        <dbReference type="Rhea" id="RHEA:44860"/>
        <dbReference type="ChEBI" id="CHEBI:16347"/>
        <dbReference type="ChEBI" id="CHEBI:57287"/>
        <dbReference type="ChEBI" id="CHEBI:77061"/>
        <dbReference type="ChEBI" id="CHEBI:84654"/>
    </reaction>
</comment>
<comment type="pathway">
    <text evidence="2">Lipid metabolism; fatty acid beta-oxidation.</text>
</comment>
<comment type="subcellular location">
    <subcellularLocation>
        <location evidence="1">Mitochondrion inner membrane</location>
        <topology evidence="1">Peripheral membrane protein</topology>
        <orientation evidence="1">Matrix side</orientation>
    </subcellularLocation>
</comment>
<comment type="similarity">
    <text evidence="4">Belongs to the carnitine/choline acetyltransferase family.</text>
</comment>
<dbReference type="EC" id="2.3.1.21"/>
<dbReference type="EMBL" id="BC105423">
    <property type="protein sequence ID" value="AAI05424.1"/>
    <property type="molecule type" value="mRNA"/>
</dbReference>
<dbReference type="RefSeq" id="NP_001039354.1">
    <property type="nucleotide sequence ID" value="NM_001045889.2"/>
</dbReference>
<dbReference type="SMR" id="Q2KJB7"/>
<dbReference type="FunCoup" id="Q2KJB7">
    <property type="interactions" value="1495"/>
</dbReference>
<dbReference type="STRING" id="9913.ENSBTAP00000019505"/>
<dbReference type="PaxDb" id="9913-ENSBTAP00000019505"/>
<dbReference type="PeptideAtlas" id="Q2KJB7"/>
<dbReference type="GeneID" id="504502"/>
<dbReference type="KEGG" id="bta:504502"/>
<dbReference type="CTD" id="1376"/>
<dbReference type="eggNOG" id="KOG3719">
    <property type="taxonomic scope" value="Eukaryota"/>
</dbReference>
<dbReference type="InParanoid" id="Q2KJB7"/>
<dbReference type="OrthoDB" id="240216at2759"/>
<dbReference type="UniPathway" id="UPA00659"/>
<dbReference type="Proteomes" id="UP000009136">
    <property type="component" value="Unplaced"/>
</dbReference>
<dbReference type="GO" id="GO:0005743">
    <property type="term" value="C:mitochondrial inner membrane"/>
    <property type="evidence" value="ECO:0007669"/>
    <property type="project" value="UniProtKB-SubCell"/>
</dbReference>
<dbReference type="GO" id="GO:0005739">
    <property type="term" value="C:mitochondrion"/>
    <property type="evidence" value="ECO:0000318"/>
    <property type="project" value="GO_Central"/>
</dbReference>
<dbReference type="GO" id="GO:0016746">
    <property type="term" value="F:acyltransferase activity"/>
    <property type="evidence" value="ECO:0000250"/>
    <property type="project" value="UniProtKB"/>
</dbReference>
<dbReference type="GO" id="GO:0008458">
    <property type="term" value="F:carnitine O-octanoyltransferase activity"/>
    <property type="evidence" value="ECO:0007669"/>
    <property type="project" value="RHEA"/>
</dbReference>
<dbReference type="GO" id="GO:0004095">
    <property type="term" value="F:carnitine O-palmitoyltransferase activity"/>
    <property type="evidence" value="ECO:0000250"/>
    <property type="project" value="UniProtKB"/>
</dbReference>
<dbReference type="GO" id="GO:0009437">
    <property type="term" value="P:carnitine metabolic process"/>
    <property type="evidence" value="ECO:0000250"/>
    <property type="project" value="UniProtKB"/>
</dbReference>
<dbReference type="GO" id="GO:0006635">
    <property type="term" value="P:fatty acid beta-oxidation"/>
    <property type="evidence" value="ECO:0000250"/>
    <property type="project" value="UniProtKB"/>
</dbReference>
<dbReference type="GO" id="GO:0001676">
    <property type="term" value="P:long-chain fatty acid metabolic process"/>
    <property type="evidence" value="ECO:0000250"/>
    <property type="project" value="UniProtKB"/>
</dbReference>
<dbReference type="FunFam" id="1.20.1280.180:FF:000001">
    <property type="entry name" value="Carnitine O-palmitoyltransferase 2, mitochondrial"/>
    <property type="match status" value="1"/>
</dbReference>
<dbReference type="FunFam" id="1.10.275.20:FF:000001">
    <property type="entry name" value="carnitine O-palmitoyltransferase 2, mitochondrial"/>
    <property type="match status" value="1"/>
</dbReference>
<dbReference type="FunFam" id="3.30.559.10:FF:000010">
    <property type="entry name" value="carnitine O-palmitoyltransferase 2, mitochondrial"/>
    <property type="match status" value="1"/>
</dbReference>
<dbReference type="Gene3D" id="1.20.1280.180">
    <property type="match status" value="1"/>
</dbReference>
<dbReference type="Gene3D" id="3.30.559.10">
    <property type="entry name" value="Chloramphenicol acetyltransferase-like domain"/>
    <property type="match status" value="1"/>
</dbReference>
<dbReference type="Gene3D" id="1.10.275.20">
    <property type="entry name" value="Choline/Carnitine o-acyltransferase"/>
    <property type="match status" value="1"/>
</dbReference>
<dbReference type="Gene3D" id="3.30.559.70">
    <property type="entry name" value="Choline/Carnitine o-acyltransferase, domain 2"/>
    <property type="match status" value="1"/>
</dbReference>
<dbReference type="InterPro" id="IPR000542">
    <property type="entry name" value="Carn_acyl_trans"/>
</dbReference>
<dbReference type="InterPro" id="IPR042572">
    <property type="entry name" value="Carn_acyl_trans_N"/>
</dbReference>
<dbReference type="InterPro" id="IPR023213">
    <property type="entry name" value="CAT-like_dom_sf"/>
</dbReference>
<dbReference type="InterPro" id="IPR039551">
    <property type="entry name" value="Cho/carn_acyl_trans"/>
</dbReference>
<dbReference type="InterPro" id="IPR042231">
    <property type="entry name" value="Cho/carn_acyl_trans_2"/>
</dbReference>
<dbReference type="PANTHER" id="PTHR22589">
    <property type="entry name" value="CARNITINE O-ACYLTRANSFERASE"/>
    <property type="match status" value="1"/>
</dbReference>
<dbReference type="PANTHER" id="PTHR22589:SF51">
    <property type="entry name" value="CARNITINE O-PALMITOYLTRANSFERASE 2, MITOCHONDRIAL"/>
    <property type="match status" value="1"/>
</dbReference>
<dbReference type="Pfam" id="PF00755">
    <property type="entry name" value="Carn_acyltransf"/>
    <property type="match status" value="1"/>
</dbReference>
<dbReference type="SUPFAM" id="SSF52777">
    <property type="entry name" value="CoA-dependent acyltransferases"/>
    <property type="match status" value="2"/>
</dbReference>
<dbReference type="PROSITE" id="PS00439">
    <property type="entry name" value="ACYLTRANSF_C_1"/>
    <property type="match status" value="1"/>
</dbReference>
<dbReference type="PROSITE" id="PS00440">
    <property type="entry name" value="ACYLTRANSF_C_2"/>
    <property type="match status" value="1"/>
</dbReference>
<organism>
    <name type="scientific">Bos taurus</name>
    <name type="common">Bovine</name>
    <dbReference type="NCBI Taxonomy" id="9913"/>
    <lineage>
        <taxon>Eukaryota</taxon>
        <taxon>Metazoa</taxon>
        <taxon>Chordata</taxon>
        <taxon>Craniata</taxon>
        <taxon>Vertebrata</taxon>
        <taxon>Euteleostomi</taxon>
        <taxon>Mammalia</taxon>
        <taxon>Eutheria</taxon>
        <taxon>Laurasiatheria</taxon>
        <taxon>Artiodactyla</taxon>
        <taxon>Ruminantia</taxon>
        <taxon>Pecora</taxon>
        <taxon>Bovidae</taxon>
        <taxon>Bovinae</taxon>
        <taxon>Bos</taxon>
    </lineage>
</organism>
<gene>
    <name type="primary">CPT2</name>
</gene>